<organism>
    <name type="scientific">Staphylococcus aureus (strain NCTC 8325 / PS 47)</name>
    <dbReference type="NCBI Taxonomy" id="93061"/>
    <lineage>
        <taxon>Bacteria</taxon>
        <taxon>Bacillati</taxon>
        <taxon>Bacillota</taxon>
        <taxon>Bacilli</taxon>
        <taxon>Bacillales</taxon>
        <taxon>Staphylococcaceae</taxon>
        <taxon>Staphylococcus</taxon>
    </lineage>
</organism>
<feature type="chain" id="PRO_0000282088" description="Uncharacterized protein SAOUHSC_00172">
    <location>
        <begin position="1"/>
        <end position="257"/>
    </location>
</feature>
<feature type="transmembrane region" description="Helical" evidence="1">
    <location>
        <begin position="6"/>
        <end position="26"/>
    </location>
</feature>
<dbReference type="EMBL" id="CP000253">
    <property type="protein sequence ID" value="ABD29350.1"/>
    <property type="molecule type" value="Genomic_DNA"/>
</dbReference>
<dbReference type="RefSeq" id="WP_000643616.1">
    <property type="nucleotide sequence ID" value="NZ_LS483365.1"/>
</dbReference>
<dbReference type="RefSeq" id="YP_498769.1">
    <property type="nucleotide sequence ID" value="NC_007795.1"/>
</dbReference>
<dbReference type="SMR" id="Q2G1F3"/>
<dbReference type="GeneID" id="3919486"/>
<dbReference type="KEGG" id="sao:SAOUHSC_00172"/>
<dbReference type="PATRIC" id="fig|93061.5.peg.160"/>
<dbReference type="HOGENOM" id="CLU_071589_0_1_9"/>
<dbReference type="OrthoDB" id="2409627at2"/>
<dbReference type="PRO" id="PR:Q2G1F3"/>
<dbReference type="Proteomes" id="UP000008816">
    <property type="component" value="Chromosome"/>
</dbReference>
<dbReference type="GO" id="GO:0005886">
    <property type="term" value="C:plasma membrane"/>
    <property type="evidence" value="ECO:0007669"/>
    <property type="project" value="UniProtKB-SubCell"/>
</dbReference>
<dbReference type="Gene3D" id="2.50.20.40">
    <property type="match status" value="1"/>
</dbReference>
<dbReference type="InterPro" id="IPR007595">
    <property type="entry name" value="Csa"/>
</dbReference>
<dbReference type="InterPro" id="IPR038641">
    <property type="entry name" value="Csa_sf"/>
</dbReference>
<dbReference type="NCBIfam" id="TIGR01742">
    <property type="entry name" value="SA_tandem_lipo"/>
    <property type="match status" value="1"/>
</dbReference>
<dbReference type="Pfam" id="PF04507">
    <property type="entry name" value="DUF576"/>
    <property type="match status" value="1"/>
</dbReference>
<reference key="1">
    <citation type="book" date="2006" name="Gram positive pathogens, 2nd edition">
        <title>The Staphylococcus aureus NCTC 8325 genome.</title>
        <editorList>
            <person name="Fischetti V."/>
            <person name="Novick R."/>
            <person name="Ferretti J."/>
            <person name="Portnoy D."/>
            <person name="Rood J."/>
        </editorList>
        <authorList>
            <person name="Gillaspy A.F."/>
            <person name="Worrell V."/>
            <person name="Orvis J."/>
            <person name="Roe B.A."/>
            <person name="Dyer D.W."/>
            <person name="Iandolo J.J."/>
        </authorList>
    </citation>
    <scope>NUCLEOTIDE SEQUENCE [LARGE SCALE GENOMIC DNA]</scope>
    <source>
        <strain>NCTC 8325 / PS 47</strain>
    </source>
</reference>
<sequence length="257" mass="29677">MKAHKIFWLNLAAIIIISIVVSGDMFLAMKWEQIHLKDGLKKVLSTYPIKNLETLYEIDGHDNPHYENNDQDTWYIESSYSVVGSDELLKEDRMLLKVDKNTHKITGEYDTTTNDRKNATDSTYKSYPVKVVNNKIVFTKDVKDPALKQKIENNQFLIQSGDLTSILNSNDLKVTHDPTTDYYNLSGKLSNDNPNVKQLKRRYNIPKNASTKVELKGMSDLKGNNHQDQKLYFYFSSPGKDQIIYKESLTYNKISEH</sequence>
<keyword id="KW-1003">Cell membrane</keyword>
<keyword id="KW-0472">Membrane</keyword>
<keyword id="KW-1185">Reference proteome</keyword>
<keyword id="KW-0812">Transmembrane</keyword>
<keyword id="KW-1133">Transmembrane helix</keyword>
<accession>Q2G1F3</accession>
<gene>
    <name type="ordered locus">SAOUHSC_00172</name>
</gene>
<name>Y172_STAA8</name>
<evidence type="ECO:0000255" key="1"/>
<evidence type="ECO:0000305" key="2"/>
<protein>
    <recommendedName>
        <fullName>Uncharacterized protein SAOUHSC_00172</fullName>
    </recommendedName>
</protein>
<proteinExistence type="inferred from homology"/>
<comment type="subcellular location">
    <subcellularLocation>
        <location evidence="2">Cell membrane</location>
        <topology evidence="2">Single-pass membrane protein</topology>
    </subcellularLocation>
</comment>
<comment type="similarity">
    <text evidence="2">Belongs to the staphylococcal tandem lipoprotein family.</text>
</comment>